<proteinExistence type="inferred from homology"/>
<geneLocation type="plasmid">
    <name>Sac</name>
</geneLocation>
<dbReference type="EC" id="2.7.1.4"/>
<dbReference type="EMBL" id="M63038">
    <property type="protein sequence ID" value="AAA27217.1"/>
    <property type="molecule type" value="Genomic_DNA"/>
</dbReference>
<dbReference type="PIR" id="A41655">
    <property type="entry name" value="A41655"/>
</dbReference>
<dbReference type="SMR" id="P24261"/>
<dbReference type="GO" id="GO:0005524">
    <property type="term" value="F:ATP binding"/>
    <property type="evidence" value="ECO:0007669"/>
    <property type="project" value="UniProtKB-KW"/>
</dbReference>
<dbReference type="GO" id="GO:0008865">
    <property type="term" value="F:fructokinase activity"/>
    <property type="evidence" value="ECO:0007669"/>
    <property type="project" value="UniProtKB-EC"/>
</dbReference>
<dbReference type="Gene3D" id="3.40.1190.20">
    <property type="match status" value="1"/>
</dbReference>
<dbReference type="InterPro" id="IPR002173">
    <property type="entry name" value="Carboh/pur_kinase_PfkB_CS"/>
</dbReference>
<dbReference type="InterPro" id="IPR050306">
    <property type="entry name" value="PfkB_Carbo_kinase"/>
</dbReference>
<dbReference type="InterPro" id="IPR011611">
    <property type="entry name" value="PfkB_dom"/>
</dbReference>
<dbReference type="InterPro" id="IPR029056">
    <property type="entry name" value="Ribokinase-like"/>
</dbReference>
<dbReference type="NCBIfam" id="NF006957">
    <property type="entry name" value="PRK09434.1"/>
    <property type="match status" value="1"/>
</dbReference>
<dbReference type="PANTHER" id="PTHR43085">
    <property type="entry name" value="HEXOKINASE FAMILY MEMBER"/>
    <property type="match status" value="1"/>
</dbReference>
<dbReference type="PANTHER" id="PTHR43085:SF1">
    <property type="entry name" value="PSEUDOURIDINE KINASE-RELATED"/>
    <property type="match status" value="1"/>
</dbReference>
<dbReference type="Pfam" id="PF00294">
    <property type="entry name" value="PfkB"/>
    <property type="match status" value="1"/>
</dbReference>
<dbReference type="SUPFAM" id="SSF53613">
    <property type="entry name" value="Ribokinase-like"/>
    <property type="match status" value="1"/>
</dbReference>
<dbReference type="PROSITE" id="PS00584">
    <property type="entry name" value="PFKB_KINASES_2"/>
    <property type="match status" value="1"/>
</dbReference>
<evidence type="ECO:0000305" key="1"/>
<name>SCRK_SALTH</name>
<protein>
    <recommendedName>
        <fullName>Fructokinase</fullName>
        <ecNumber>2.7.1.4</ecNumber>
    </recommendedName>
</protein>
<reference key="1">
    <citation type="journal article" date="1991" name="J. Bacteriol.">
        <title>Characterization of the major promoter for the plasmid-encoded sucrose genes scrY, scrA, and scrB.</title>
        <authorList>
            <person name="Cowan P.J."/>
            <person name="Nagesha H."/>
            <person name="Leonard L."/>
            <person name="Howard J.L."/>
            <person name="Pittard A.J."/>
        </authorList>
    </citation>
    <scope>NUCLEOTIDE SEQUENCE [GENOMIC DNA]</scope>
</reference>
<sequence>VDLDDQGERTFTFMVRPSADLFLVEEDLPQFAAGQWLHVCSIALSAEPSRSTTFAAMESIRSAGGRVSFDPNIRPDLWQDQALLLACLDRALHMANVVKLSEEELVFISSSNDLAYGIASVTERYQPELLLVTRGKAGVLAAFQQKFTHFNARPVASVDTTGAGDAFVAGLLASLAANGMPTDMTALEPTLTLAQTCGALATTAKGAMTALPYQRDLNRQF</sequence>
<organism>
    <name type="scientific">Salmonella thompson</name>
    <dbReference type="NCBI Taxonomy" id="600"/>
    <lineage>
        <taxon>Bacteria</taxon>
        <taxon>Pseudomonadati</taxon>
        <taxon>Pseudomonadota</taxon>
        <taxon>Gammaproteobacteria</taxon>
        <taxon>Enterobacterales</taxon>
        <taxon>Enterobacteriaceae</taxon>
        <taxon>Salmonella</taxon>
    </lineage>
</organism>
<gene>
    <name type="primary">scrK</name>
</gene>
<comment type="catalytic activity">
    <reaction>
        <text>D-fructose + ATP = D-fructose 6-phosphate + ADP + H(+)</text>
        <dbReference type="Rhea" id="RHEA:16125"/>
        <dbReference type="ChEBI" id="CHEBI:15378"/>
        <dbReference type="ChEBI" id="CHEBI:30616"/>
        <dbReference type="ChEBI" id="CHEBI:37721"/>
        <dbReference type="ChEBI" id="CHEBI:61527"/>
        <dbReference type="ChEBI" id="CHEBI:456216"/>
        <dbReference type="EC" id="2.7.1.4"/>
    </reaction>
</comment>
<comment type="similarity">
    <text evidence="1">Belongs to the carbohydrate kinase PfkB family.</text>
</comment>
<keyword id="KW-0067">ATP-binding</keyword>
<keyword id="KW-0119">Carbohydrate metabolism</keyword>
<keyword id="KW-0418">Kinase</keyword>
<keyword id="KW-0547">Nucleotide-binding</keyword>
<keyword id="KW-0614">Plasmid</keyword>
<keyword id="KW-0808">Transferase</keyword>
<feature type="chain" id="PRO_0000080137" description="Fructokinase">
    <location>
        <begin position="1" status="less than"/>
        <end position="221"/>
    </location>
</feature>
<feature type="non-terminal residue">
    <location>
        <position position="1"/>
    </location>
</feature>
<accession>P24261</accession>